<evidence type="ECO:0000255" key="1">
    <source>
        <dbReference type="PROSITE-ProRule" id="PRU00114"/>
    </source>
</evidence>
<evidence type="ECO:0007829" key="2">
    <source>
        <dbReference type="PDB" id="3U0W"/>
    </source>
</evidence>
<feature type="chain" id="PRO_0000059802" description="Ig kappa chain V-V region HP 124E1">
    <location>
        <begin position="1"/>
        <end position="108" status="greater than"/>
    </location>
</feature>
<feature type="region of interest" description="Framework-1">
    <location>
        <begin position="1"/>
        <end position="23"/>
    </location>
</feature>
<feature type="region of interest" description="Complementarity-determining-1">
    <location>
        <begin position="24"/>
        <end position="34"/>
    </location>
</feature>
<feature type="region of interest" description="Framework-2">
    <location>
        <begin position="35"/>
        <end position="49"/>
    </location>
</feature>
<feature type="region of interest" description="Complementarity-determining-2">
    <location>
        <begin position="50"/>
        <end position="56"/>
    </location>
</feature>
<feature type="region of interest" description="Framework-3">
    <location>
        <begin position="57"/>
        <end position="88"/>
    </location>
</feature>
<feature type="region of interest" description="Complementarity-determining-3">
    <location>
        <begin position="89"/>
        <end position="97"/>
    </location>
</feature>
<feature type="region of interest" description="Framework-4">
    <location>
        <begin position="98"/>
        <end position="108"/>
    </location>
</feature>
<feature type="disulfide bond" evidence="1">
    <location>
        <begin position="23"/>
        <end position="88"/>
    </location>
</feature>
<feature type="non-terminal residue">
    <location>
        <position position="108"/>
    </location>
</feature>
<feature type="strand" evidence="2">
    <location>
        <begin position="9"/>
        <end position="13"/>
    </location>
</feature>
<feature type="strand" evidence="2">
    <location>
        <begin position="19"/>
        <end position="27"/>
    </location>
</feature>
<feature type="strand" evidence="2">
    <location>
        <begin position="33"/>
        <end position="38"/>
    </location>
</feature>
<feature type="strand" evidence="2">
    <location>
        <begin position="44"/>
        <end position="49"/>
    </location>
</feature>
<feature type="turn" evidence="2">
    <location>
        <begin position="50"/>
        <end position="52"/>
    </location>
</feature>
<feature type="strand" evidence="2">
    <location>
        <begin position="62"/>
        <end position="67"/>
    </location>
</feature>
<feature type="strand" evidence="2">
    <location>
        <begin position="70"/>
        <end position="77"/>
    </location>
</feature>
<feature type="helix" evidence="2">
    <location>
        <begin position="80"/>
        <end position="82"/>
    </location>
</feature>
<feature type="strand" evidence="2">
    <location>
        <begin position="84"/>
        <end position="90"/>
    </location>
</feature>
<feature type="strand" evidence="2">
    <location>
        <begin position="92"/>
        <end position="95"/>
    </location>
</feature>
<feature type="strand" evidence="2">
    <location>
        <begin position="102"/>
        <end position="106"/>
    </location>
</feature>
<protein>
    <recommendedName>
        <fullName>Ig kappa chain V-V region HP 124E1</fullName>
    </recommendedName>
</protein>
<organism>
    <name type="scientific">Mus musculus</name>
    <name type="common">Mouse</name>
    <dbReference type="NCBI Taxonomy" id="10090"/>
    <lineage>
        <taxon>Eukaryota</taxon>
        <taxon>Metazoa</taxon>
        <taxon>Chordata</taxon>
        <taxon>Craniata</taxon>
        <taxon>Vertebrata</taxon>
        <taxon>Euteleostomi</taxon>
        <taxon>Mammalia</taxon>
        <taxon>Eutheria</taxon>
        <taxon>Euarchontoglires</taxon>
        <taxon>Glires</taxon>
        <taxon>Rodentia</taxon>
        <taxon>Myomorpha</taxon>
        <taxon>Muroidea</taxon>
        <taxon>Muridae</taxon>
        <taxon>Murinae</taxon>
        <taxon>Mus</taxon>
        <taxon>Mus</taxon>
    </lineage>
</organism>
<comment type="miscellaneous">
    <text>Anti-arsonate hybridoma protein.</text>
</comment>
<sequence length="108" mass="11965">DIQMTQTTSSLSASLGDRVTISCRASQDINNYLNWYQQKPDGTVKLLIYYTSRLHSGVPSRFSGSGSGTDYSLTISNLEQEDIATYFCQQGKTLPRTFGGGTKLEIKR</sequence>
<accession>P01647</accession>
<reference key="1">
    <citation type="journal article" date="1981" name="Proc. Natl. Acad. Sci. U.S.A.">
        <title>Complete amino acid sequence of light chain variable regions derived from five monoclonal anti-p-azophenylarsonate antibodies differing with respect to a crossreactive idiotype.</title>
        <authorList>
            <person name="Siegelman M."/>
            <person name="Capra J.D."/>
        </authorList>
    </citation>
    <scope>PROTEIN SEQUENCE</scope>
    <source>
        <strain>A/J</strain>
    </source>
</reference>
<dbReference type="PIR" id="A28044">
    <property type="entry name" value="A28044"/>
</dbReference>
<dbReference type="PIR" id="B26405">
    <property type="entry name" value="B26405"/>
</dbReference>
<dbReference type="PIR" id="B28044">
    <property type="entry name" value="B28044"/>
</dbReference>
<dbReference type="PIR" id="C26405">
    <property type="entry name" value="C26405"/>
</dbReference>
<dbReference type="PIR" id="D48677">
    <property type="entry name" value="D48677"/>
</dbReference>
<dbReference type="PDB" id="1EZV">
    <property type="method" value="X-ray"/>
    <property type="resolution" value="2.30 A"/>
    <property type="chains" value="Y=10-107"/>
</dbReference>
<dbReference type="PDB" id="2V7H">
    <property type="method" value="X-ray"/>
    <property type="resolution" value="2.80 A"/>
    <property type="chains" value="A/L=1-108"/>
</dbReference>
<dbReference type="PDB" id="2VWE">
    <property type="method" value="X-ray"/>
    <property type="resolution" value="3.40 A"/>
    <property type="chains" value="C/J=1-108"/>
</dbReference>
<dbReference type="PDB" id="3U0W">
    <property type="method" value="X-ray"/>
    <property type="resolution" value="2.00 A"/>
    <property type="chains" value="L=1-108"/>
</dbReference>
<dbReference type="PDB" id="4PD4">
    <property type="method" value="X-ray"/>
    <property type="resolution" value="3.04 A"/>
    <property type="chains" value="K=10-107"/>
</dbReference>
<dbReference type="PDBsum" id="1EZV"/>
<dbReference type="PDBsum" id="2V7H"/>
<dbReference type="PDBsum" id="2VWE"/>
<dbReference type="PDBsum" id="3U0W"/>
<dbReference type="PDBsum" id="4PD4"/>
<dbReference type="SMR" id="P01647"/>
<dbReference type="FunCoup" id="P01647">
    <property type="interactions" value="620"/>
</dbReference>
<dbReference type="MINT" id="P01647"/>
<dbReference type="InParanoid" id="P01647"/>
<dbReference type="EvolutionaryTrace" id="P01647"/>
<dbReference type="Proteomes" id="UP000000589">
    <property type="component" value="Unplaced"/>
</dbReference>
<dbReference type="RNAct" id="P01647">
    <property type="molecule type" value="protein"/>
</dbReference>
<dbReference type="GO" id="GO:0019814">
    <property type="term" value="C:immunoglobulin complex"/>
    <property type="evidence" value="ECO:0000318"/>
    <property type="project" value="GO_Central"/>
</dbReference>
<dbReference type="GO" id="GO:0002250">
    <property type="term" value="P:adaptive immune response"/>
    <property type="evidence" value="ECO:0007669"/>
    <property type="project" value="UniProtKB-KW"/>
</dbReference>
<dbReference type="GO" id="GO:0006955">
    <property type="term" value="P:immune response"/>
    <property type="evidence" value="ECO:0000318"/>
    <property type="project" value="GO_Central"/>
</dbReference>
<dbReference type="CDD" id="cd04980">
    <property type="entry name" value="IgV_L_kappa"/>
    <property type="match status" value="1"/>
</dbReference>
<dbReference type="FunFam" id="2.60.40.10:FF:000212">
    <property type="entry name" value="Immunoglobulin kappa chain variable 12-38"/>
    <property type="match status" value="1"/>
</dbReference>
<dbReference type="Gene3D" id="2.60.40.10">
    <property type="entry name" value="Immunoglobulins"/>
    <property type="match status" value="1"/>
</dbReference>
<dbReference type="InterPro" id="IPR007110">
    <property type="entry name" value="Ig-like_dom"/>
</dbReference>
<dbReference type="InterPro" id="IPR036179">
    <property type="entry name" value="Ig-like_dom_sf"/>
</dbReference>
<dbReference type="InterPro" id="IPR013783">
    <property type="entry name" value="Ig-like_fold"/>
</dbReference>
<dbReference type="InterPro" id="IPR003599">
    <property type="entry name" value="Ig_sub"/>
</dbReference>
<dbReference type="InterPro" id="IPR013106">
    <property type="entry name" value="Ig_V-set"/>
</dbReference>
<dbReference type="InterPro" id="IPR050150">
    <property type="entry name" value="IgV_Light_Chain"/>
</dbReference>
<dbReference type="PANTHER" id="PTHR23267">
    <property type="entry name" value="IMMUNOGLOBULIN LIGHT CHAIN"/>
    <property type="match status" value="1"/>
</dbReference>
<dbReference type="Pfam" id="PF07686">
    <property type="entry name" value="V-set"/>
    <property type="match status" value="1"/>
</dbReference>
<dbReference type="SMART" id="SM00409">
    <property type="entry name" value="IG"/>
    <property type="match status" value="1"/>
</dbReference>
<dbReference type="SMART" id="SM00406">
    <property type="entry name" value="IGv"/>
    <property type="match status" value="1"/>
</dbReference>
<dbReference type="SUPFAM" id="SSF48726">
    <property type="entry name" value="Immunoglobulin"/>
    <property type="match status" value="1"/>
</dbReference>
<dbReference type="PROSITE" id="PS50835">
    <property type="entry name" value="IG_LIKE"/>
    <property type="match status" value="1"/>
</dbReference>
<name>KV5AE_MOUSE</name>
<proteinExistence type="evidence at protein level"/>
<keyword id="KW-0002">3D-structure</keyword>
<keyword id="KW-1064">Adaptive immunity</keyword>
<keyword id="KW-0903">Direct protein sequencing</keyword>
<keyword id="KW-1015">Disulfide bond</keyword>
<keyword id="KW-0391">Immunity</keyword>
<keyword id="KW-1280">Immunoglobulin</keyword>
<keyword id="KW-1185">Reference proteome</keyword>